<name>RS9_LISMF</name>
<gene>
    <name evidence="1" type="primary">rpsI</name>
    <name type="ordered locus">LMOf2365_2569</name>
</gene>
<protein>
    <recommendedName>
        <fullName evidence="1">Small ribosomal subunit protein uS9</fullName>
    </recommendedName>
    <alternativeName>
        <fullName evidence="3">30S ribosomal protein S9</fullName>
    </alternativeName>
</protein>
<accession>Q71WI2</accession>
<feature type="chain" id="PRO_0000111371" description="Small ribosomal subunit protein uS9">
    <location>
        <begin position="1"/>
        <end position="130"/>
    </location>
</feature>
<feature type="region of interest" description="Disordered" evidence="2">
    <location>
        <begin position="109"/>
        <end position="130"/>
    </location>
</feature>
<feature type="compositionally biased region" description="Basic residues" evidence="2">
    <location>
        <begin position="111"/>
        <end position="130"/>
    </location>
</feature>
<keyword id="KW-0687">Ribonucleoprotein</keyword>
<keyword id="KW-0689">Ribosomal protein</keyword>
<dbReference type="EMBL" id="AE017262">
    <property type="protein sequence ID" value="AAT05334.1"/>
    <property type="molecule type" value="Genomic_DNA"/>
</dbReference>
<dbReference type="RefSeq" id="WP_003726075.1">
    <property type="nucleotide sequence ID" value="NC_002973.6"/>
</dbReference>
<dbReference type="SMR" id="Q71WI2"/>
<dbReference type="GeneID" id="93236018"/>
<dbReference type="KEGG" id="lmf:LMOf2365_2569"/>
<dbReference type="HOGENOM" id="CLU_046483_2_1_9"/>
<dbReference type="GO" id="GO:0022627">
    <property type="term" value="C:cytosolic small ribosomal subunit"/>
    <property type="evidence" value="ECO:0007669"/>
    <property type="project" value="TreeGrafter"/>
</dbReference>
<dbReference type="GO" id="GO:0003723">
    <property type="term" value="F:RNA binding"/>
    <property type="evidence" value="ECO:0007669"/>
    <property type="project" value="TreeGrafter"/>
</dbReference>
<dbReference type="GO" id="GO:0003735">
    <property type="term" value="F:structural constituent of ribosome"/>
    <property type="evidence" value="ECO:0007669"/>
    <property type="project" value="InterPro"/>
</dbReference>
<dbReference type="GO" id="GO:0006412">
    <property type="term" value="P:translation"/>
    <property type="evidence" value="ECO:0007669"/>
    <property type="project" value="UniProtKB-UniRule"/>
</dbReference>
<dbReference type="FunFam" id="3.30.230.10:FF:000001">
    <property type="entry name" value="30S ribosomal protein S9"/>
    <property type="match status" value="1"/>
</dbReference>
<dbReference type="Gene3D" id="3.30.230.10">
    <property type="match status" value="1"/>
</dbReference>
<dbReference type="HAMAP" id="MF_00532_B">
    <property type="entry name" value="Ribosomal_uS9_B"/>
    <property type="match status" value="1"/>
</dbReference>
<dbReference type="InterPro" id="IPR020568">
    <property type="entry name" value="Ribosomal_Su5_D2-typ_SF"/>
</dbReference>
<dbReference type="InterPro" id="IPR000754">
    <property type="entry name" value="Ribosomal_uS9"/>
</dbReference>
<dbReference type="InterPro" id="IPR023035">
    <property type="entry name" value="Ribosomal_uS9_bac/plastid"/>
</dbReference>
<dbReference type="InterPro" id="IPR020574">
    <property type="entry name" value="Ribosomal_uS9_CS"/>
</dbReference>
<dbReference type="InterPro" id="IPR014721">
    <property type="entry name" value="Ribsml_uS5_D2-typ_fold_subgr"/>
</dbReference>
<dbReference type="NCBIfam" id="NF001099">
    <property type="entry name" value="PRK00132.1"/>
    <property type="match status" value="1"/>
</dbReference>
<dbReference type="PANTHER" id="PTHR21569">
    <property type="entry name" value="RIBOSOMAL PROTEIN S9"/>
    <property type="match status" value="1"/>
</dbReference>
<dbReference type="PANTHER" id="PTHR21569:SF1">
    <property type="entry name" value="SMALL RIBOSOMAL SUBUNIT PROTEIN US9M"/>
    <property type="match status" value="1"/>
</dbReference>
<dbReference type="Pfam" id="PF00380">
    <property type="entry name" value="Ribosomal_S9"/>
    <property type="match status" value="1"/>
</dbReference>
<dbReference type="SUPFAM" id="SSF54211">
    <property type="entry name" value="Ribosomal protein S5 domain 2-like"/>
    <property type="match status" value="1"/>
</dbReference>
<dbReference type="PROSITE" id="PS00360">
    <property type="entry name" value="RIBOSOMAL_S9"/>
    <property type="match status" value="1"/>
</dbReference>
<proteinExistence type="inferred from homology"/>
<comment type="similarity">
    <text evidence="1">Belongs to the universal ribosomal protein uS9 family.</text>
</comment>
<reference key="1">
    <citation type="journal article" date="2004" name="Nucleic Acids Res.">
        <title>Whole genome comparisons of serotype 4b and 1/2a strains of the food-borne pathogen Listeria monocytogenes reveal new insights into the core genome components of this species.</title>
        <authorList>
            <person name="Nelson K.E."/>
            <person name="Fouts D.E."/>
            <person name="Mongodin E.F."/>
            <person name="Ravel J."/>
            <person name="DeBoy R.T."/>
            <person name="Kolonay J.F."/>
            <person name="Rasko D.A."/>
            <person name="Angiuoli S.V."/>
            <person name="Gill S.R."/>
            <person name="Paulsen I.T."/>
            <person name="Peterson J.D."/>
            <person name="White O."/>
            <person name="Nelson W.C."/>
            <person name="Nierman W.C."/>
            <person name="Beanan M.J."/>
            <person name="Brinkac L.M."/>
            <person name="Daugherty S.C."/>
            <person name="Dodson R.J."/>
            <person name="Durkin A.S."/>
            <person name="Madupu R."/>
            <person name="Haft D.H."/>
            <person name="Selengut J."/>
            <person name="Van Aken S.E."/>
            <person name="Khouri H.M."/>
            <person name="Fedorova N."/>
            <person name="Forberger H.A."/>
            <person name="Tran B."/>
            <person name="Kathariou S."/>
            <person name="Wonderling L.D."/>
            <person name="Uhlich G.A."/>
            <person name="Bayles D.O."/>
            <person name="Luchansky J.B."/>
            <person name="Fraser C.M."/>
        </authorList>
    </citation>
    <scope>NUCLEOTIDE SEQUENCE [LARGE SCALE GENOMIC DNA]</scope>
    <source>
        <strain>F2365</strain>
    </source>
</reference>
<evidence type="ECO:0000255" key="1">
    <source>
        <dbReference type="HAMAP-Rule" id="MF_00532"/>
    </source>
</evidence>
<evidence type="ECO:0000256" key="2">
    <source>
        <dbReference type="SAM" id="MobiDB-lite"/>
    </source>
</evidence>
<evidence type="ECO:0000305" key="3"/>
<sequence>MAQVQYYGTGRRKSSVARVRLVPGDGKIVINNRDWEDYIPFAALREVIKQPLVATETLGNYDVLVNVHGGGYTGQAGAIRHGVARALLQVAPEYRPALKSAGLLTRDPRMKERKKYGLKGARRAPQFSKR</sequence>
<organism>
    <name type="scientific">Listeria monocytogenes serotype 4b (strain F2365)</name>
    <dbReference type="NCBI Taxonomy" id="265669"/>
    <lineage>
        <taxon>Bacteria</taxon>
        <taxon>Bacillati</taxon>
        <taxon>Bacillota</taxon>
        <taxon>Bacilli</taxon>
        <taxon>Bacillales</taxon>
        <taxon>Listeriaceae</taxon>
        <taxon>Listeria</taxon>
    </lineage>
</organism>